<protein>
    <recommendedName>
        <fullName evidence="1">Ribosomal RNA small subunit methyltransferase A</fullName>
        <ecNumber evidence="1">2.1.1.182</ecNumber>
    </recommendedName>
    <alternativeName>
        <fullName evidence="1">16S rRNA (adenine(1518)-N(6)/adenine(1519)-N(6))-dimethyltransferase</fullName>
    </alternativeName>
    <alternativeName>
        <fullName evidence="1">16S rRNA dimethyladenosine transferase</fullName>
    </alternativeName>
    <alternativeName>
        <fullName evidence="1">16S rRNA dimethylase</fullName>
    </alternativeName>
    <alternativeName>
        <fullName evidence="1">S-adenosylmethionine-6-N', N'-adenosyl(rRNA) dimethyltransferase</fullName>
    </alternativeName>
</protein>
<evidence type="ECO:0000255" key="1">
    <source>
        <dbReference type="HAMAP-Rule" id="MF_00607"/>
    </source>
</evidence>
<evidence type="ECO:0000305" key="2"/>
<keyword id="KW-0963">Cytoplasm</keyword>
<keyword id="KW-0489">Methyltransferase</keyword>
<keyword id="KW-0694">RNA-binding</keyword>
<keyword id="KW-0698">rRNA processing</keyword>
<keyword id="KW-0949">S-adenosyl-L-methionine</keyword>
<keyword id="KW-0808">Transferase</keyword>
<sequence length="290" mass="32746">MRIADYSVTKAVLDRHGFTFKKSFGQNFLTDTNILQKIVDTAEIDQNVNVIEIGPGIGALTEFLAENAAEVMAFEIDDRLVPILADTLRDFDNVQVVNQDILKADLQTQIKQFKNPDLPIKVVANLPYYITTPILMHLIESKIPFQEFVVMMQREVADRISAEPNTKAYGSLSIAVQYYMTAKVAFIVPRTVFVPAPNVDSAILKMVRRDQPLIEIKDEDFFFRVSRLSFVHRRKTLWNNLTSHFGKSEDIKTKLEKGLALADIKPSIRGEALSIQDFGKLADALKEVGL</sequence>
<name>RSMA_STRP6</name>
<comment type="function">
    <text evidence="1">Specifically dimethylates two adjacent adenosines (A1518 and A1519) in the loop of a conserved hairpin near the 3'-end of 16S rRNA in the 30S particle. May play a critical role in biogenesis of 30S subunits.</text>
</comment>
<comment type="catalytic activity">
    <reaction evidence="1">
        <text>adenosine(1518)/adenosine(1519) in 16S rRNA + 4 S-adenosyl-L-methionine = N(6)-dimethyladenosine(1518)/N(6)-dimethyladenosine(1519) in 16S rRNA + 4 S-adenosyl-L-homocysteine + 4 H(+)</text>
        <dbReference type="Rhea" id="RHEA:19609"/>
        <dbReference type="Rhea" id="RHEA-COMP:10232"/>
        <dbReference type="Rhea" id="RHEA-COMP:10233"/>
        <dbReference type="ChEBI" id="CHEBI:15378"/>
        <dbReference type="ChEBI" id="CHEBI:57856"/>
        <dbReference type="ChEBI" id="CHEBI:59789"/>
        <dbReference type="ChEBI" id="CHEBI:74411"/>
        <dbReference type="ChEBI" id="CHEBI:74493"/>
        <dbReference type="EC" id="2.1.1.182"/>
    </reaction>
</comment>
<comment type="subcellular location">
    <subcellularLocation>
        <location evidence="1">Cytoplasm</location>
    </subcellularLocation>
</comment>
<comment type="similarity">
    <text evidence="1">Belongs to the class I-like SAM-binding methyltransferase superfamily. rRNA adenine N(6)-methyltransferase family. RsmA subfamily.</text>
</comment>
<comment type="sequence caution" evidence="2">
    <conflict type="erroneous initiation">
        <sequence resource="EMBL-CDS" id="AAT86389"/>
    </conflict>
</comment>
<reference key="1">
    <citation type="journal article" date="2004" name="J. Infect. Dis.">
        <title>Progress toward characterization of the group A Streptococcus metagenome: complete genome sequence of a macrolide-resistant serotype M6 strain.</title>
        <authorList>
            <person name="Banks D.J."/>
            <person name="Porcella S.F."/>
            <person name="Barbian K.D."/>
            <person name="Beres S.B."/>
            <person name="Philips L.E."/>
            <person name="Voyich J.M."/>
            <person name="DeLeo F.R."/>
            <person name="Martin J.M."/>
            <person name="Somerville G.A."/>
            <person name="Musser J.M."/>
        </authorList>
    </citation>
    <scope>NUCLEOTIDE SEQUENCE [LARGE SCALE GENOMIC DNA]</scope>
    <source>
        <strain>ATCC BAA-946 / MGAS10394</strain>
    </source>
</reference>
<dbReference type="EC" id="2.1.1.182" evidence="1"/>
<dbReference type="EMBL" id="CP000003">
    <property type="protein sequence ID" value="AAT86389.1"/>
    <property type="status" value="ALT_INIT"/>
    <property type="molecule type" value="Genomic_DNA"/>
</dbReference>
<dbReference type="RefSeq" id="WP_011888588.1">
    <property type="nucleotide sequence ID" value="NC_006086.1"/>
</dbReference>
<dbReference type="SMR" id="Q5XDX4"/>
<dbReference type="KEGG" id="spa:M6_Spy0254"/>
<dbReference type="HOGENOM" id="CLU_041220_0_0_9"/>
<dbReference type="Proteomes" id="UP000001167">
    <property type="component" value="Chromosome"/>
</dbReference>
<dbReference type="GO" id="GO:0005829">
    <property type="term" value="C:cytosol"/>
    <property type="evidence" value="ECO:0007669"/>
    <property type="project" value="TreeGrafter"/>
</dbReference>
<dbReference type="GO" id="GO:0052908">
    <property type="term" value="F:16S rRNA (adenine(1518)-N(6)/adenine(1519)-N(6))-dimethyltransferase activity"/>
    <property type="evidence" value="ECO:0007669"/>
    <property type="project" value="UniProtKB-EC"/>
</dbReference>
<dbReference type="GO" id="GO:0003723">
    <property type="term" value="F:RNA binding"/>
    <property type="evidence" value="ECO:0007669"/>
    <property type="project" value="UniProtKB-KW"/>
</dbReference>
<dbReference type="CDD" id="cd02440">
    <property type="entry name" value="AdoMet_MTases"/>
    <property type="match status" value="1"/>
</dbReference>
<dbReference type="FunFam" id="3.40.50.150:FF:000023">
    <property type="entry name" value="Ribosomal RNA small subunit methyltransferase A"/>
    <property type="match status" value="1"/>
</dbReference>
<dbReference type="Gene3D" id="1.10.8.100">
    <property type="entry name" value="Ribosomal RNA adenine dimethylase-like, domain 2"/>
    <property type="match status" value="1"/>
</dbReference>
<dbReference type="Gene3D" id="3.40.50.150">
    <property type="entry name" value="Vaccinia Virus protein VP39"/>
    <property type="match status" value="1"/>
</dbReference>
<dbReference type="HAMAP" id="MF_00607">
    <property type="entry name" value="16SrRNA_methyltr_A"/>
    <property type="match status" value="1"/>
</dbReference>
<dbReference type="InterPro" id="IPR001737">
    <property type="entry name" value="KsgA/Erm"/>
</dbReference>
<dbReference type="InterPro" id="IPR023165">
    <property type="entry name" value="rRNA_Ade_diMease-like_C"/>
</dbReference>
<dbReference type="InterPro" id="IPR020596">
    <property type="entry name" value="rRNA_Ade_Mease_Trfase_CS"/>
</dbReference>
<dbReference type="InterPro" id="IPR020598">
    <property type="entry name" value="rRNA_Ade_methylase_Trfase_N"/>
</dbReference>
<dbReference type="InterPro" id="IPR011530">
    <property type="entry name" value="rRNA_adenine_dimethylase"/>
</dbReference>
<dbReference type="InterPro" id="IPR029063">
    <property type="entry name" value="SAM-dependent_MTases_sf"/>
</dbReference>
<dbReference type="NCBIfam" id="TIGR00755">
    <property type="entry name" value="ksgA"/>
    <property type="match status" value="1"/>
</dbReference>
<dbReference type="PANTHER" id="PTHR11727">
    <property type="entry name" value="DIMETHYLADENOSINE TRANSFERASE"/>
    <property type="match status" value="1"/>
</dbReference>
<dbReference type="PANTHER" id="PTHR11727:SF7">
    <property type="entry name" value="DIMETHYLADENOSINE TRANSFERASE-RELATED"/>
    <property type="match status" value="1"/>
</dbReference>
<dbReference type="Pfam" id="PF00398">
    <property type="entry name" value="RrnaAD"/>
    <property type="match status" value="1"/>
</dbReference>
<dbReference type="SMART" id="SM00650">
    <property type="entry name" value="rADc"/>
    <property type="match status" value="1"/>
</dbReference>
<dbReference type="SUPFAM" id="SSF53335">
    <property type="entry name" value="S-adenosyl-L-methionine-dependent methyltransferases"/>
    <property type="match status" value="1"/>
</dbReference>
<dbReference type="PROSITE" id="PS01131">
    <property type="entry name" value="RRNA_A_DIMETH"/>
    <property type="match status" value="1"/>
</dbReference>
<dbReference type="PROSITE" id="PS51689">
    <property type="entry name" value="SAM_RNA_A_N6_MT"/>
    <property type="match status" value="1"/>
</dbReference>
<gene>
    <name evidence="1" type="primary">rsmA</name>
    <name evidence="1" type="synonym">ksgA</name>
    <name type="ordered locus">M6_Spy0254</name>
</gene>
<proteinExistence type="inferred from homology"/>
<accession>Q5XDX4</accession>
<feature type="chain" id="PRO_0000101620" description="Ribosomal RNA small subunit methyltransferase A">
    <location>
        <begin position="1"/>
        <end position="290"/>
    </location>
</feature>
<feature type="binding site" evidence="1">
    <location>
        <position position="27"/>
    </location>
    <ligand>
        <name>S-adenosyl-L-methionine</name>
        <dbReference type="ChEBI" id="CHEBI:59789"/>
    </ligand>
</feature>
<feature type="binding site" evidence="1">
    <location>
        <position position="29"/>
    </location>
    <ligand>
        <name>S-adenosyl-L-methionine</name>
        <dbReference type="ChEBI" id="CHEBI:59789"/>
    </ligand>
</feature>
<feature type="binding site" evidence="1">
    <location>
        <position position="54"/>
    </location>
    <ligand>
        <name>S-adenosyl-L-methionine</name>
        <dbReference type="ChEBI" id="CHEBI:59789"/>
    </ligand>
</feature>
<feature type="binding site" evidence="1">
    <location>
        <position position="75"/>
    </location>
    <ligand>
        <name>S-adenosyl-L-methionine</name>
        <dbReference type="ChEBI" id="CHEBI:59789"/>
    </ligand>
</feature>
<feature type="binding site" evidence="1">
    <location>
        <position position="100"/>
    </location>
    <ligand>
        <name>S-adenosyl-L-methionine</name>
        <dbReference type="ChEBI" id="CHEBI:59789"/>
    </ligand>
</feature>
<feature type="binding site" evidence="1">
    <location>
        <position position="125"/>
    </location>
    <ligand>
        <name>S-adenosyl-L-methionine</name>
        <dbReference type="ChEBI" id="CHEBI:59789"/>
    </ligand>
</feature>
<organism>
    <name type="scientific">Streptococcus pyogenes serotype M6 (strain ATCC BAA-946 / MGAS10394)</name>
    <dbReference type="NCBI Taxonomy" id="286636"/>
    <lineage>
        <taxon>Bacteria</taxon>
        <taxon>Bacillati</taxon>
        <taxon>Bacillota</taxon>
        <taxon>Bacilli</taxon>
        <taxon>Lactobacillales</taxon>
        <taxon>Streptococcaceae</taxon>
        <taxon>Streptococcus</taxon>
    </lineage>
</organism>